<feature type="signal peptide" evidence="2">
    <location>
        <begin position="1"/>
        <end position="23"/>
    </location>
</feature>
<feature type="chain" id="PRO_0000025252" description="Porin-like protein BUsg_347">
    <location>
        <begin position="24"/>
        <end position="369"/>
    </location>
</feature>
<organism>
    <name type="scientific">Buchnera aphidicola subsp. Schizaphis graminum (strain Sg)</name>
    <dbReference type="NCBI Taxonomy" id="198804"/>
    <lineage>
        <taxon>Bacteria</taxon>
        <taxon>Pseudomonadati</taxon>
        <taxon>Pseudomonadota</taxon>
        <taxon>Gammaproteobacteria</taxon>
        <taxon>Enterobacterales</taxon>
        <taxon>Erwiniaceae</taxon>
        <taxon>Buchnera</taxon>
    </lineage>
</organism>
<name>PORL_BUCAP</name>
<dbReference type="EMBL" id="AE013218">
    <property type="protein sequence ID" value="AAM67900.1"/>
    <property type="molecule type" value="Genomic_DNA"/>
</dbReference>
<dbReference type="RefSeq" id="WP_011053867.1">
    <property type="nucleotide sequence ID" value="NC_004061.1"/>
</dbReference>
<dbReference type="SMR" id="Q8K9I8"/>
<dbReference type="STRING" id="198804.BUsg_347"/>
<dbReference type="GeneID" id="93003817"/>
<dbReference type="KEGG" id="bas:BUsg_347"/>
<dbReference type="eggNOG" id="COG3203">
    <property type="taxonomic scope" value="Bacteria"/>
</dbReference>
<dbReference type="HOGENOM" id="CLU_058202_0_0_6"/>
<dbReference type="Proteomes" id="UP000000416">
    <property type="component" value="Chromosome"/>
</dbReference>
<dbReference type="GO" id="GO:0009279">
    <property type="term" value="C:cell outer membrane"/>
    <property type="evidence" value="ECO:0007669"/>
    <property type="project" value="UniProtKB-SubCell"/>
</dbReference>
<dbReference type="GO" id="GO:0046930">
    <property type="term" value="C:pore complex"/>
    <property type="evidence" value="ECO:0007669"/>
    <property type="project" value="UniProtKB-KW"/>
</dbReference>
<dbReference type="GO" id="GO:0015288">
    <property type="term" value="F:porin activity"/>
    <property type="evidence" value="ECO:0007669"/>
    <property type="project" value="UniProtKB-KW"/>
</dbReference>
<dbReference type="GO" id="GO:0034220">
    <property type="term" value="P:monoatomic ion transmembrane transport"/>
    <property type="evidence" value="ECO:0007669"/>
    <property type="project" value="InterPro"/>
</dbReference>
<dbReference type="CDD" id="cd00342">
    <property type="entry name" value="gram_neg_porins"/>
    <property type="match status" value="1"/>
</dbReference>
<dbReference type="Gene3D" id="2.40.160.10">
    <property type="entry name" value="Porin"/>
    <property type="match status" value="1"/>
</dbReference>
<dbReference type="InterPro" id="IPR050298">
    <property type="entry name" value="Gram-neg_bact_OMP"/>
</dbReference>
<dbReference type="InterPro" id="IPR033900">
    <property type="entry name" value="Gram_neg_porin_domain"/>
</dbReference>
<dbReference type="InterPro" id="IPR023614">
    <property type="entry name" value="Porin_dom_sf"/>
</dbReference>
<dbReference type="InterPro" id="IPR001897">
    <property type="entry name" value="Porin_gammaproteobac"/>
</dbReference>
<dbReference type="InterPro" id="IPR001702">
    <property type="entry name" value="Porin_Gram-ve"/>
</dbReference>
<dbReference type="PANTHER" id="PTHR34501:SF8">
    <property type="entry name" value="OUTER MEMBRANE PORIN N-RELATED"/>
    <property type="match status" value="1"/>
</dbReference>
<dbReference type="PANTHER" id="PTHR34501">
    <property type="entry name" value="PROTEIN YDDL-RELATED"/>
    <property type="match status" value="1"/>
</dbReference>
<dbReference type="Pfam" id="PF00267">
    <property type="entry name" value="Porin_1"/>
    <property type="match status" value="1"/>
</dbReference>
<dbReference type="PRINTS" id="PR00183">
    <property type="entry name" value="ECOLIPORIN"/>
</dbReference>
<dbReference type="PRINTS" id="PR00182">
    <property type="entry name" value="ECOLNEIPORIN"/>
</dbReference>
<dbReference type="SUPFAM" id="SSF56935">
    <property type="entry name" value="Porins"/>
    <property type="match status" value="1"/>
</dbReference>
<evidence type="ECO:0000250" key="1"/>
<evidence type="ECO:0000255" key="2"/>
<evidence type="ECO:0000305" key="3"/>
<protein>
    <recommendedName>
        <fullName>Porin-like protein BUsg_347</fullName>
    </recommendedName>
</protein>
<proteinExistence type="inferred from homology"/>
<gene>
    <name type="ordered locus">BUsg_347</name>
</gene>
<sequence>MKNHKSLAILIPMLFAGSTAVNAIEIFNKNGNKLELYGSINPNHNFSNEFLSTKISSKEDNTNAILGLSGKIKITDKLSSYAQIEYKNNFFMPEDLMNKQQPNTVRLGYAGLKYGNLGSIDYGRNYGVIHDAQSLTDHVPYINKKSIFAYNDNYMVGRNHSLLTYRNNNVFGLVDGISFALQYQDEIKNRDLNKGKSSSGWGASLKYESDSGLTAVGSCFTSERMISSNKKDLKNTSVDSYGLGFKYDANNVYVAAFYGSARNLMPYNMHISDSFINETQNIEAIAEYSFDSGFHPSLSYLDSKGQNSNSPKKELDLAKQINISTRYEFNKNVSTYMNYKINLLKENDFISQNQIPTDNTIGAGVVYQF</sequence>
<comment type="function">
    <text evidence="1">Forms pores that allow passive diffusion of small molecules across the membrane.</text>
</comment>
<comment type="subunit">
    <text evidence="1">Homotrimer.</text>
</comment>
<comment type="subcellular location">
    <subcellularLocation>
        <location evidence="1">Cell outer membrane</location>
        <topology evidence="1">Multi-pass membrane protein</topology>
    </subcellularLocation>
</comment>
<comment type="similarity">
    <text evidence="3">Belongs to the Gram-negative porin family.</text>
</comment>
<accession>Q8K9I8</accession>
<keyword id="KW-0998">Cell outer membrane</keyword>
<keyword id="KW-0406">Ion transport</keyword>
<keyword id="KW-0472">Membrane</keyword>
<keyword id="KW-0626">Porin</keyword>
<keyword id="KW-0732">Signal</keyword>
<keyword id="KW-0812">Transmembrane</keyword>
<keyword id="KW-1134">Transmembrane beta strand</keyword>
<keyword id="KW-0813">Transport</keyword>
<reference key="1">
    <citation type="journal article" date="2002" name="Science">
        <title>50 million years of genomic stasis in endosymbiotic bacteria.</title>
        <authorList>
            <person name="Tamas I."/>
            <person name="Klasson L."/>
            <person name="Canbaeck B."/>
            <person name="Naeslund A.K."/>
            <person name="Eriksson A.-S."/>
            <person name="Wernegreen J.J."/>
            <person name="Sandstroem J.P."/>
            <person name="Moran N.A."/>
            <person name="Andersson S.G.E."/>
        </authorList>
    </citation>
    <scope>NUCLEOTIDE SEQUENCE [LARGE SCALE GENOMIC DNA]</scope>
    <source>
        <strain>Sg</strain>
    </source>
</reference>